<protein>
    <recommendedName>
        <fullName evidence="1">Coproporphyrin III ferrochelatase</fullName>
        <ecNumber evidence="1">4.99.1.9</ecNumber>
    </recommendedName>
</protein>
<organism>
    <name type="scientific">Mycobacterium tuberculosis (strain ATCC 25177 / H37Ra)</name>
    <dbReference type="NCBI Taxonomy" id="419947"/>
    <lineage>
        <taxon>Bacteria</taxon>
        <taxon>Bacillati</taxon>
        <taxon>Actinomycetota</taxon>
        <taxon>Actinomycetes</taxon>
        <taxon>Mycobacteriales</taxon>
        <taxon>Mycobacteriaceae</taxon>
        <taxon>Mycobacterium</taxon>
        <taxon>Mycobacterium tuberculosis complex</taxon>
    </lineage>
</organism>
<comment type="function">
    <text evidence="1">Involved in coproporphyrin-dependent heme b biosynthesis. Catalyzes the insertion of ferrous iron into coproporphyrin III to form Fe-coproporphyrin III.</text>
</comment>
<comment type="catalytic activity">
    <reaction evidence="1">
        <text>Fe-coproporphyrin III + 2 H(+) = coproporphyrin III + Fe(2+)</text>
        <dbReference type="Rhea" id="RHEA:49572"/>
        <dbReference type="ChEBI" id="CHEBI:15378"/>
        <dbReference type="ChEBI" id="CHEBI:29033"/>
        <dbReference type="ChEBI" id="CHEBI:68438"/>
        <dbReference type="ChEBI" id="CHEBI:131725"/>
        <dbReference type="EC" id="4.99.1.9"/>
    </reaction>
    <physiologicalReaction direction="right-to-left" evidence="1">
        <dbReference type="Rhea" id="RHEA:49574"/>
    </physiologicalReaction>
</comment>
<comment type="pathway">
    <text evidence="1">Porphyrin-containing compound metabolism; protoheme biosynthesis.</text>
</comment>
<comment type="subcellular location">
    <subcellularLocation>
        <location evidence="1">Cytoplasm</location>
    </subcellularLocation>
</comment>
<comment type="similarity">
    <text evidence="1">Belongs to the ferrochelatase family.</text>
</comment>
<evidence type="ECO:0000255" key="1">
    <source>
        <dbReference type="HAMAP-Rule" id="MF_00323"/>
    </source>
</evidence>
<proteinExistence type="inferred from homology"/>
<dbReference type="EC" id="4.99.1.9" evidence="1"/>
<dbReference type="EMBL" id="CP000611">
    <property type="protein sequence ID" value="ABQ73239.1"/>
    <property type="molecule type" value="Genomic_DNA"/>
</dbReference>
<dbReference type="RefSeq" id="WP_003407559.1">
    <property type="nucleotide sequence ID" value="NZ_CP016972.1"/>
</dbReference>
<dbReference type="SMR" id="A5U2I9"/>
<dbReference type="KEGG" id="mra:MRA_1495"/>
<dbReference type="eggNOG" id="COG0276">
    <property type="taxonomic scope" value="Bacteria"/>
</dbReference>
<dbReference type="HOGENOM" id="CLU_018884_2_0_11"/>
<dbReference type="UniPathway" id="UPA00252"/>
<dbReference type="Proteomes" id="UP000001988">
    <property type="component" value="Chromosome"/>
</dbReference>
<dbReference type="GO" id="GO:0005737">
    <property type="term" value="C:cytoplasm"/>
    <property type="evidence" value="ECO:0007669"/>
    <property type="project" value="UniProtKB-SubCell"/>
</dbReference>
<dbReference type="GO" id="GO:0004325">
    <property type="term" value="F:ferrochelatase activity"/>
    <property type="evidence" value="ECO:0007669"/>
    <property type="project" value="UniProtKB-UniRule"/>
</dbReference>
<dbReference type="GO" id="GO:0046872">
    <property type="term" value="F:metal ion binding"/>
    <property type="evidence" value="ECO:0007669"/>
    <property type="project" value="UniProtKB-KW"/>
</dbReference>
<dbReference type="GO" id="GO:0006783">
    <property type="term" value="P:heme biosynthetic process"/>
    <property type="evidence" value="ECO:0007669"/>
    <property type="project" value="UniProtKB-UniRule"/>
</dbReference>
<dbReference type="CDD" id="cd00419">
    <property type="entry name" value="Ferrochelatase_C"/>
    <property type="match status" value="1"/>
</dbReference>
<dbReference type="CDD" id="cd03411">
    <property type="entry name" value="Ferrochelatase_N"/>
    <property type="match status" value="1"/>
</dbReference>
<dbReference type="FunFam" id="3.40.50.1400:FF:000007">
    <property type="entry name" value="Ferrochelatase"/>
    <property type="match status" value="1"/>
</dbReference>
<dbReference type="Gene3D" id="3.40.50.1400">
    <property type="match status" value="2"/>
</dbReference>
<dbReference type="HAMAP" id="MF_00323">
    <property type="entry name" value="Ferrochelatase"/>
    <property type="match status" value="1"/>
</dbReference>
<dbReference type="InterPro" id="IPR001015">
    <property type="entry name" value="Ferrochelatase"/>
</dbReference>
<dbReference type="InterPro" id="IPR019772">
    <property type="entry name" value="Ferrochelatase_AS"/>
</dbReference>
<dbReference type="InterPro" id="IPR033644">
    <property type="entry name" value="Ferrochelatase_C"/>
</dbReference>
<dbReference type="InterPro" id="IPR033659">
    <property type="entry name" value="Ferrochelatase_N"/>
</dbReference>
<dbReference type="NCBIfam" id="TIGR00109">
    <property type="entry name" value="hemH"/>
    <property type="match status" value="1"/>
</dbReference>
<dbReference type="NCBIfam" id="NF000689">
    <property type="entry name" value="PRK00035.2-1"/>
    <property type="match status" value="1"/>
</dbReference>
<dbReference type="PANTHER" id="PTHR11108">
    <property type="entry name" value="FERROCHELATASE"/>
    <property type="match status" value="1"/>
</dbReference>
<dbReference type="PANTHER" id="PTHR11108:SF1">
    <property type="entry name" value="FERROCHELATASE, MITOCHONDRIAL"/>
    <property type="match status" value="1"/>
</dbReference>
<dbReference type="Pfam" id="PF00762">
    <property type="entry name" value="Ferrochelatase"/>
    <property type="match status" value="1"/>
</dbReference>
<dbReference type="SUPFAM" id="SSF53800">
    <property type="entry name" value="Chelatase"/>
    <property type="match status" value="1"/>
</dbReference>
<dbReference type="PROSITE" id="PS00534">
    <property type="entry name" value="FERROCHELATASE"/>
    <property type="match status" value="1"/>
</dbReference>
<feature type="chain" id="PRO_1000019325" description="Coproporphyrin III ferrochelatase">
    <location>
        <begin position="1"/>
        <end position="344"/>
    </location>
</feature>
<feature type="binding site" evidence="1">
    <location>
        <position position="52"/>
    </location>
    <ligand>
        <name>Fe-coproporphyrin III</name>
        <dbReference type="ChEBI" id="CHEBI:68438"/>
    </ligand>
</feature>
<feature type="binding site" evidence="1">
    <location>
        <position position="116"/>
    </location>
    <ligand>
        <name>Fe-coproporphyrin III</name>
        <dbReference type="ChEBI" id="CHEBI:68438"/>
    </ligand>
</feature>
<feature type="binding site" evidence="1">
    <location>
        <position position="172"/>
    </location>
    <ligand>
        <name>Fe(2+)</name>
        <dbReference type="ChEBI" id="CHEBI:29033"/>
    </ligand>
</feature>
<feature type="binding site" evidence="1">
    <location>
        <position position="255"/>
    </location>
    <ligand>
        <name>Fe(2+)</name>
        <dbReference type="ChEBI" id="CHEBI:29033"/>
    </ligand>
</feature>
<sequence>MQFDAVLLLSFGGPEGPEQVRPFLENVTRGRGVPAERLDAVAEHYLHFGGVSPINGINRTLIAELEAQQELPVYFGNRNWEPYVEDAVTAMRDNGVRRAAVFATSAWSGYSSCTQYVEDIARARRAAGRDAPELVKLRPYFDHPLFVEMFADAITAAAATVRGDARLVFTAHSIPTAADRRCGPNLYSRQVAYATRLVAAAAGYCDFDLAWQSRSGPPQVPWLEPDVTDQLTGLAGAGINAVIVCPIGFVADHIEVVWDLDHELRLQAEAAGIAYARASTPNADPRFARLARGLIDELRYGRIPARVSGPDPVPGCLSSINGQPCRPPHCVASVSPARPSAGSP</sequence>
<accession>A5U2I9</accession>
<reference key="1">
    <citation type="journal article" date="2008" name="PLoS ONE">
        <title>Genetic basis of virulence attenuation revealed by comparative genomic analysis of Mycobacterium tuberculosis strain H37Ra versus H37Rv.</title>
        <authorList>
            <person name="Zheng H."/>
            <person name="Lu L."/>
            <person name="Wang B."/>
            <person name="Pu S."/>
            <person name="Zhang X."/>
            <person name="Zhu G."/>
            <person name="Shi W."/>
            <person name="Zhang L."/>
            <person name="Wang H."/>
            <person name="Wang S."/>
            <person name="Zhao G."/>
            <person name="Zhang Y."/>
        </authorList>
    </citation>
    <scope>NUCLEOTIDE SEQUENCE [LARGE SCALE GENOMIC DNA]</scope>
    <source>
        <strain>ATCC 25177 / H37Ra</strain>
    </source>
</reference>
<name>CPFC_MYCTA</name>
<gene>
    <name evidence="1" type="primary">cpfC</name>
    <name type="ordered locus">MRA_1495</name>
</gene>
<keyword id="KW-0963">Cytoplasm</keyword>
<keyword id="KW-0350">Heme biosynthesis</keyword>
<keyword id="KW-0408">Iron</keyword>
<keyword id="KW-0456">Lyase</keyword>
<keyword id="KW-0479">Metal-binding</keyword>
<keyword id="KW-0627">Porphyrin biosynthesis</keyword>
<keyword id="KW-1185">Reference proteome</keyword>